<organism>
    <name type="scientific">Corynebacterium kroppenstedtii (strain DSM 44385 / JCM 11950 / CIP 105744 / CCUG 35717)</name>
    <dbReference type="NCBI Taxonomy" id="645127"/>
    <lineage>
        <taxon>Bacteria</taxon>
        <taxon>Bacillati</taxon>
        <taxon>Actinomycetota</taxon>
        <taxon>Actinomycetes</taxon>
        <taxon>Mycobacteriales</taxon>
        <taxon>Corynebacteriaceae</taxon>
        <taxon>Corynebacterium</taxon>
    </lineage>
</organism>
<proteinExistence type="inferred from homology"/>
<feature type="chain" id="PRO_1000213169" description="Transcriptional regulator MraZ">
    <location>
        <begin position="1"/>
        <end position="143"/>
    </location>
</feature>
<feature type="domain" description="SpoVT-AbrB 1" evidence="2">
    <location>
        <begin position="5"/>
        <end position="47"/>
    </location>
</feature>
<feature type="domain" description="SpoVT-AbrB 2" evidence="2">
    <location>
        <begin position="76"/>
        <end position="119"/>
    </location>
</feature>
<comment type="subunit">
    <text evidence="1">Forms oligomers.</text>
</comment>
<comment type="subcellular location">
    <subcellularLocation>
        <location evidence="1">Cytoplasm</location>
        <location evidence="1">Nucleoid</location>
    </subcellularLocation>
</comment>
<comment type="similarity">
    <text evidence="1">Belongs to the MraZ family.</text>
</comment>
<gene>
    <name evidence="1" type="primary">mraZ</name>
    <name type="ordered locus">ckrop_0738</name>
</gene>
<reference key="1">
    <citation type="journal article" date="2008" name="J. Biotechnol.">
        <title>Ultrafast pyrosequencing of Corynebacterium kroppenstedtii DSM44385 revealed insights into the physiology of a lipophilic corynebacterium that lacks mycolic acids.</title>
        <authorList>
            <person name="Tauch A."/>
            <person name="Schneider J."/>
            <person name="Szczepanowski R."/>
            <person name="Tilker A."/>
            <person name="Viehoever P."/>
            <person name="Gartemann K.-H."/>
            <person name="Arnold W."/>
            <person name="Blom J."/>
            <person name="Brinkrolf K."/>
            <person name="Brune I."/>
            <person name="Goetker S."/>
            <person name="Weisshaar B."/>
            <person name="Goesmann A."/>
            <person name="Droege M."/>
            <person name="Puehler A."/>
        </authorList>
    </citation>
    <scope>NUCLEOTIDE SEQUENCE [LARGE SCALE GENOMIC DNA]</scope>
    <source>
        <strain>DSM 44385 / JCM 11950 / CIP 105744 / CCUG 35717</strain>
    </source>
</reference>
<dbReference type="EMBL" id="CP001620">
    <property type="protein sequence ID" value="ACR17496.1"/>
    <property type="molecule type" value="Genomic_DNA"/>
</dbReference>
<dbReference type="RefSeq" id="WP_012731383.1">
    <property type="nucleotide sequence ID" value="NC_012704.1"/>
</dbReference>
<dbReference type="SMR" id="C4LI41"/>
<dbReference type="STRING" id="645127.ckrop_0738"/>
<dbReference type="GeneID" id="92727312"/>
<dbReference type="KEGG" id="ckp:ckrop_0738"/>
<dbReference type="eggNOG" id="COG2001">
    <property type="taxonomic scope" value="Bacteria"/>
</dbReference>
<dbReference type="HOGENOM" id="CLU_107907_0_5_11"/>
<dbReference type="OrthoDB" id="9807753at2"/>
<dbReference type="Proteomes" id="UP000001473">
    <property type="component" value="Chromosome"/>
</dbReference>
<dbReference type="GO" id="GO:0005737">
    <property type="term" value="C:cytoplasm"/>
    <property type="evidence" value="ECO:0007669"/>
    <property type="project" value="UniProtKB-UniRule"/>
</dbReference>
<dbReference type="GO" id="GO:0009295">
    <property type="term" value="C:nucleoid"/>
    <property type="evidence" value="ECO:0007669"/>
    <property type="project" value="UniProtKB-SubCell"/>
</dbReference>
<dbReference type="GO" id="GO:0003700">
    <property type="term" value="F:DNA-binding transcription factor activity"/>
    <property type="evidence" value="ECO:0007669"/>
    <property type="project" value="UniProtKB-UniRule"/>
</dbReference>
<dbReference type="GO" id="GO:0000976">
    <property type="term" value="F:transcription cis-regulatory region binding"/>
    <property type="evidence" value="ECO:0007669"/>
    <property type="project" value="TreeGrafter"/>
</dbReference>
<dbReference type="GO" id="GO:2000143">
    <property type="term" value="P:negative regulation of DNA-templated transcription initiation"/>
    <property type="evidence" value="ECO:0007669"/>
    <property type="project" value="TreeGrafter"/>
</dbReference>
<dbReference type="CDD" id="cd16321">
    <property type="entry name" value="MraZ_C"/>
    <property type="match status" value="1"/>
</dbReference>
<dbReference type="CDD" id="cd16320">
    <property type="entry name" value="MraZ_N"/>
    <property type="match status" value="1"/>
</dbReference>
<dbReference type="Gene3D" id="3.40.1550.20">
    <property type="entry name" value="Transcriptional regulator MraZ domain"/>
    <property type="match status" value="1"/>
</dbReference>
<dbReference type="HAMAP" id="MF_01008">
    <property type="entry name" value="MraZ"/>
    <property type="match status" value="1"/>
</dbReference>
<dbReference type="InterPro" id="IPR003444">
    <property type="entry name" value="MraZ"/>
</dbReference>
<dbReference type="InterPro" id="IPR035644">
    <property type="entry name" value="MraZ_C"/>
</dbReference>
<dbReference type="InterPro" id="IPR020603">
    <property type="entry name" value="MraZ_dom"/>
</dbReference>
<dbReference type="InterPro" id="IPR035642">
    <property type="entry name" value="MraZ_N"/>
</dbReference>
<dbReference type="InterPro" id="IPR038619">
    <property type="entry name" value="MraZ_sf"/>
</dbReference>
<dbReference type="InterPro" id="IPR007159">
    <property type="entry name" value="SpoVT-AbrB_dom"/>
</dbReference>
<dbReference type="InterPro" id="IPR037914">
    <property type="entry name" value="SpoVT-AbrB_sf"/>
</dbReference>
<dbReference type="NCBIfam" id="TIGR00242">
    <property type="entry name" value="division/cell wall cluster transcriptional repressor MraZ"/>
    <property type="match status" value="1"/>
</dbReference>
<dbReference type="PANTHER" id="PTHR34701">
    <property type="entry name" value="TRANSCRIPTIONAL REGULATOR MRAZ"/>
    <property type="match status" value="1"/>
</dbReference>
<dbReference type="PANTHER" id="PTHR34701:SF1">
    <property type="entry name" value="TRANSCRIPTIONAL REGULATOR MRAZ"/>
    <property type="match status" value="1"/>
</dbReference>
<dbReference type="Pfam" id="PF02381">
    <property type="entry name" value="MraZ"/>
    <property type="match status" value="2"/>
</dbReference>
<dbReference type="SUPFAM" id="SSF89447">
    <property type="entry name" value="AbrB/MazE/MraZ-like"/>
    <property type="match status" value="1"/>
</dbReference>
<dbReference type="PROSITE" id="PS51740">
    <property type="entry name" value="SPOVT_ABRB"/>
    <property type="match status" value="2"/>
</dbReference>
<evidence type="ECO:0000255" key="1">
    <source>
        <dbReference type="HAMAP-Rule" id="MF_01008"/>
    </source>
</evidence>
<evidence type="ECO:0000255" key="2">
    <source>
        <dbReference type="PROSITE-ProRule" id="PRU01076"/>
    </source>
</evidence>
<protein>
    <recommendedName>
        <fullName>Transcriptional regulator MraZ</fullName>
    </recommendedName>
</protein>
<keyword id="KW-0963">Cytoplasm</keyword>
<keyword id="KW-0238">DNA-binding</keyword>
<keyword id="KW-1185">Reference proteome</keyword>
<keyword id="KW-0677">Repeat</keyword>
<keyword id="KW-0804">Transcription</keyword>
<keyword id="KW-0805">Transcription regulation</keyword>
<accession>C4LI41</accession>
<name>MRAZ_CORK4</name>
<sequence length="143" mass="16032">MFFGTFTPKMDDKGRLTLPAKFRDELAEGLMVTKGQDHSLAIYPRNVFLERARKAAAASRTNPEARAFVRNLAASADEQSVDGHGRITISPDHRRYAGLSKECVVIGSVDFVEIWNAESWNQYQAEHEESYANGDDAAFMDFL</sequence>